<evidence type="ECO:0000255" key="1">
    <source>
        <dbReference type="HAMAP-Rule" id="MF_01365"/>
    </source>
</evidence>
<evidence type="ECO:0000256" key="2">
    <source>
        <dbReference type="SAM" id="MobiDB-lite"/>
    </source>
</evidence>
<evidence type="ECO:0000305" key="3"/>
<organism>
    <name type="scientific">Shewanella piezotolerans (strain WP3 / JCM 13877)</name>
    <dbReference type="NCBI Taxonomy" id="225849"/>
    <lineage>
        <taxon>Bacteria</taxon>
        <taxon>Pseudomonadati</taxon>
        <taxon>Pseudomonadota</taxon>
        <taxon>Gammaproteobacteria</taxon>
        <taxon>Alteromonadales</taxon>
        <taxon>Shewanellaceae</taxon>
        <taxon>Shewanella</taxon>
    </lineage>
</organism>
<proteinExistence type="inferred from homology"/>
<dbReference type="EMBL" id="CP000472">
    <property type="protein sequence ID" value="ACJ28782.1"/>
    <property type="molecule type" value="Genomic_DNA"/>
</dbReference>
<dbReference type="RefSeq" id="WP_020912150.1">
    <property type="nucleotide sequence ID" value="NC_011566.1"/>
</dbReference>
<dbReference type="SMR" id="B8CNE8"/>
<dbReference type="STRING" id="225849.swp_2026"/>
<dbReference type="KEGG" id="swp:swp_2026"/>
<dbReference type="eggNOG" id="COG0097">
    <property type="taxonomic scope" value="Bacteria"/>
</dbReference>
<dbReference type="HOGENOM" id="CLU_065464_1_2_6"/>
<dbReference type="OrthoDB" id="9805007at2"/>
<dbReference type="Proteomes" id="UP000000753">
    <property type="component" value="Chromosome"/>
</dbReference>
<dbReference type="GO" id="GO:0022625">
    <property type="term" value="C:cytosolic large ribosomal subunit"/>
    <property type="evidence" value="ECO:0007669"/>
    <property type="project" value="TreeGrafter"/>
</dbReference>
<dbReference type="GO" id="GO:0019843">
    <property type="term" value="F:rRNA binding"/>
    <property type="evidence" value="ECO:0007669"/>
    <property type="project" value="UniProtKB-UniRule"/>
</dbReference>
<dbReference type="GO" id="GO:0003735">
    <property type="term" value="F:structural constituent of ribosome"/>
    <property type="evidence" value="ECO:0007669"/>
    <property type="project" value="InterPro"/>
</dbReference>
<dbReference type="GO" id="GO:0002181">
    <property type="term" value="P:cytoplasmic translation"/>
    <property type="evidence" value="ECO:0007669"/>
    <property type="project" value="TreeGrafter"/>
</dbReference>
<dbReference type="FunFam" id="3.90.930.12:FF:000001">
    <property type="entry name" value="50S ribosomal protein L6"/>
    <property type="match status" value="1"/>
</dbReference>
<dbReference type="FunFam" id="3.90.930.12:FF:000002">
    <property type="entry name" value="50S ribosomal protein L6"/>
    <property type="match status" value="1"/>
</dbReference>
<dbReference type="Gene3D" id="3.90.930.12">
    <property type="entry name" value="Ribosomal protein L6, alpha-beta domain"/>
    <property type="match status" value="2"/>
</dbReference>
<dbReference type="HAMAP" id="MF_01365_B">
    <property type="entry name" value="Ribosomal_uL6_B"/>
    <property type="match status" value="1"/>
</dbReference>
<dbReference type="InterPro" id="IPR000702">
    <property type="entry name" value="Ribosomal_uL6-like"/>
</dbReference>
<dbReference type="InterPro" id="IPR036789">
    <property type="entry name" value="Ribosomal_uL6-like_a/b-dom_sf"/>
</dbReference>
<dbReference type="InterPro" id="IPR020040">
    <property type="entry name" value="Ribosomal_uL6_a/b-dom"/>
</dbReference>
<dbReference type="InterPro" id="IPR019906">
    <property type="entry name" value="Ribosomal_uL6_bac-type"/>
</dbReference>
<dbReference type="InterPro" id="IPR002358">
    <property type="entry name" value="Ribosomal_uL6_CS"/>
</dbReference>
<dbReference type="NCBIfam" id="TIGR03654">
    <property type="entry name" value="L6_bact"/>
    <property type="match status" value="1"/>
</dbReference>
<dbReference type="PANTHER" id="PTHR11655">
    <property type="entry name" value="60S/50S RIBOSOMAL PROTEIN L6/L9"/>
    <property type="match status" value="1"/>
</dbReference>
<dbReference type="PANTHER" id="PTHR11655:SF14">
    <property type="entry name" value="LARGE RIBOSOMAL SUBUNIT PROTEIN UL6M"/>
    <property type="match status" value="1"/>
</dbReference>
<dbReference type="Pfam" id="PF00347">
    <property type="entry name" value="Ribosomal_L6"/>
    <property type="match status" value="2"/>
</dbReference>
<dbReference type="PIRSF" id="PIRSF002162">
    <property type="entry name" value="Ribosomal_L6"/>
    <property type="match status" value="1"/>
</dbReference>
<dbReference type="PRINTS" id="PR00059">
    <property type="entry name" value="RIBOSOMALL6"/>
</dbReference>
<dbReference type="SUPFAM" id="SSF56053">
    <property type="entry name" value="Ribosomal protein L6"/>
    <property type="match status" value="2"/>
</dbReference>
<dbReference type="PROSITE" id="PS00525">
    <property type="entry name" value="RIBOSOMAL_L6_1"/>
    <property type="match status" value="1"/>
</dbReference>
<comment type="function">
    <text evidence="1">This protein binds to the 23S rRNA, and is important in its secondary structure. It is located near the subunit interface in the base of the L7/L12 stalk, and near the tRNA binding site of the peptidyltransferase center.</text>
</comment>
<comment type="subunit">
    <text evidence="1">Part of the 50S ribosomal subunit.</text>
</comment>
<comment type="similarity">
    <text evidence="1">Belongs to the universal ribosomal protein uL6 family.</text>
</comment>
<sequence length="176" mass="18692">MSRVAKAPVAIPAGVEVTLNEQTITVKGTKGSLTRVINADVSVVVEDNEIKCSSVEGVKTAAQAGTARALINNMVVGVTAGFEKKLQLIGVGYRAKIAGKGVDLTLGFSHPLVHELPDGVTAECPSQTEIVLKGTDKQLIGQVAAEIRGYRPPEPYKGKGVRYADEQVRRKEAKKK</sequence>
<reference key="1">
    <citation type="journal article" date="2008" name="PLoS ONE">
        <title>Environmental adaptation: genomic analysis of the piezotolerant and psychrotolerant deep-sea iron reducing bacterium Shewanella piezotolerans WP3.</title>
        <authorList>
            <person name="Wang F."/>
            <person name="Wang J."/>
            <person name="Jian H."/>
            <person name="Zhang B."/>
            <person name="Li S."/>
            <person name="Wang F."/>
            <person name="Zeng X."/>
            <person name="Gao L."/>
            <person name="Bartlett D.H."/>
            <person name="Yu J."/>
            <person name="Hu S."/>
            <person name="Xiao X."/>
        </authorList>
    </citation>
    <scope>NUCLEOTIDE SEQUENCE [LARGE SCALE GENOMIC DNA]</scope>
    <source>
        <strain>WP3 / JCM 13877</strain>
    </source>
</reference>
<feature type="chain" id="PRO_1000144048" description="Large ribosomal subunit protein uL6">
    <location>
        <begin position="1"/>
        <end position="176"/>
    </location>
</feature>
<feature type="region of interest" description="Disordered" evidence="2">
    <location>
        <begin position="151"/>
        <end position="176"/>
    </location>
</feature>
<feature type="compositionally biased region" description="Basic and acidic residues" evidence="2">
    <location>
        <begin position="151"/>
        <end position="170"/>
    </location>
</feature>
<name>RL6_SHEPW</name>
<protein>
    <recommendedName>
        <fullName evidence="1">Large ribosomal subunit protein uL6</fullName>
    </recommendedName>
    <alternativeName>
        <fullName evidence="3">50S ribosomal protein L6</fullName>
    </alternativeName>
</protein>
<keyword id="KW-0687">Ribonucleoprotein</keyword>
<keyword id="KW-0689">Ribosomal protein</keyword>
<keyword id="KW-0694">RNA-binding</keyword>
<keyword id="KW-0699">rRNA-binding</keyword>
<accession>B8CNE8</accession>
<gene>
    <name evidence="1" type="primary">rplF</name>
    <name type="ordered locus">swp_2026</name>
</gene>